<feature type="chain" id="PRO_0000124867" description="Prefoldin subunit beta">
    <location>
        <begin position="1"/>
        <end position="117"/>
    </location>
</feature>
<feature type="helix" evidence="3">
    <location>
        <begin position="6"/>
        <end position="9"/>
    </location>
</feature>
<feature type="helix" evidence="3">
    <location>
        <begin position="15"/>
        <end position="47"/>
    </location>
</feature>
<feature type="strand" evidence="3">
    <location>
        <begin position="55"/>
        <end position="59"/>
    </location>
</feature>
<feature type="strand" evidence="3">
    <location>
        <begin position="62"/>
        <end position="66"/>
    </location>
</feature>
<feature type="helix" evidence="3">
    <location>
        <begin position="68"/>
        <end position="109"/>
    </location>
</feature>
<dbReference type="EMBL" id="BA000001">
    <property type="protein sequence ID" value="BAA29621.1"/>
    <property type="molecule type" value="Genomic_DNA"/>
</dbReference>
<dbReference type="PIR" id="H71166">
    <property type="entry name" value="H71166"/>
</dbReference>
<dbReference type="RefSeq" id="WP_010884634.1">
    <property type="nucleotide sequence ID" value="NC_000961.1"/>
</dbReference>
<dbReference type="PDB" id="2ZDI">
    <property type="method" value="X-ray"/>
    <property type="resolution" value="3.00 A"/>
    <property type="chains" value="A/B=1-117"/>
</dbReference>
<dbReference type="PDBsum" id="2ZDI"/>
<dbReference type="SMR" id="O58268"/>
<dbReference type="DIP" id="DIP-29171N"/>
<dbReference type="IntAct" id="O58268">
    <property type="interactions" value="1"/>
</dbReference>
<dbReference type="STRING" id="70601.gene:9377467"/>
<dbReference type="EnsemblBacteria" id="BAA29621">
    <property type="protein sequence ID" value="BAA29621"/>
    <property type="gene ID" value="BAA29621"/>
</dbReference>
<dbReference type="GeneID" id="1444421"/>
<dbReference type="KEGG" id="pho:PH0532"/>
<dbReference type="eggNOG" id="arCOG01342">
    <property type="taxonomic scope" value="Archaea"/>
</dbReference>
<dbReference type="OrthoDB" id="86066at2157"/>
<dbReference type="EvolutionaryTrace" id="O58268"/>
<dbReference type="Proteomes" id="UP000000752">
    <property type="component" value="Chromosome"/>
</dbReference>
<dbReference type="GO" id="GO:0005737">
    <property type="term" value="C:cytoplasm"/>
    <property type="evidence" value="ECO:0007669"/>
    <property type="project" value="UniProtKB-SubCell"/>
</dbReference>
<dbReference type="GO" id="GO:0016272">
    <property type="term" value="C:prefoldin complex"/>
    <property type="evidence" value="ECO:0007669"/>
    <property type="project" value="UniProtKB-UniRule"/>
</dbReference>
<dbReference type="GO" id="GO:0044183">
    <property type="term" value="F:protein folding chaperone"/>
    <property type="evidence" value="ECO:0007669"/>
    <property type="project" value="TreeGrafter"/>
</dbReference>
<dbReference type="GO" id="GO:0051082">
    <property type="term" value="F:unfolded protein binding"/>
    <property type="evidence" value="ECO:0007669"/>
    <property type="project" value="UniProtKB-UniRule"/>
</dbReference>
<dbReference type="CDD" id="cd23162">
    <property type="entry name" value="Prefoldin_beta_GimC"/>
    <property type="match status" value="1"/>
</dbReference>
<dbReference type="Gene3D" id="1.10.287.370">
    <property type="match status" value="1"/>
</dbReference>
<dbReference type="HAMAP" id="MF_00307">
    <property type="entry name" value="PfdB"/>
    <property type="match status" value="1"/>
</dbReference>
<dbReference type="InterPro" id="IPR002777">
    <property type="entry name" value="PFD_beta-like"/>
</dbReference>
<dbReference type="InterPro" id="IPR012713">
    <property type="entry name" value="PfdB"/>
</dbReference>
<dbReference type="InterPro" id="IPR009053">
    <property type="entry name" value="Prefoldin"/>
</dbReference>
<dbReference type="NCBIfam" id="TIGR02338">
    <property type="entry name" value="gimC_beta"/>
    <property type="match status" value="1"/>
</dbReference>
<dbReference type="PANTHER" id="PTHR20903:SF0">
    <property type="entry name" value="PREFOLDIN SUBUNIT 1"/>
    <property type="match status" value="1"/>
</dbReference>
<dbReference type="PANTHER" id="PTHR20903">
    <property type="entry name" value="PREFOLDIN SUBUNIT 1-RELATED"/>
    <property type="match status" value="1"/>
</dbReference>
<dbReference type="Pfam" id="PF01920">
    <property type="entry name" value="Prefoldin_2"/>
    <property type="match status" value="1"/>
</dbReference>
<dbReference type="SUPFAM" id="SSF46579">
    <property type="entry name" value="Prefoldin"/>
    <property type="match status" value="1"/>
</dbReference>
<organism>
    <name type="scientific">Pyrococcus horikoshii (strain ATCC 700860 / DSM 12428 / JCM 9974 / NBRC 100139 / OT-3)</name>
    <dbReference type="NCBI Taxonomy" id="70601"/>
    <lineage>
        <taxon>Archaea</taxon>
        <taxon>Methanobacteriati</taxon>
        <taxon>Methanobacteriota</taxon>
        <taxon>Thermococci</taxon>
        <taxon>Thermococcales</taxon>
        <taxon>Thermococcaceae</taxon>
        <taxon>Pyrococcus</taxon>
    </lineage>
</organism>
<reference key="1">
    <citation type="journal article" date="1998" name="DNA Res.">
        <title>Complete sequence and gene organization of the genome of a hyper-thermophilic archaebacterium, Pyrococcus horikoshii OT3.</title>
        <authorList>
            <person name="Kawarabayasi Y."/>
            <person name="Sawada M."/>
            <person name="Horikawa H."/>
            <person name="Haikawa Y."/>
            <person name="Hino Y."/>
            <person name="Yamamoto S."/>
            <person name="Sekine M."/>
            <person name="Baba S."/>
            <person name="Kosugi H."/>
            <person name="Hosoyama A."/>
            <person name="Nagai Y."/>
            <person name="Sakai M."/>
            <person name="Ogura K."/>
            <person name="Otsuka R."/>
            <person name="Nakazawa H."/>
            <person name="Takamiya M."/>
            <person name="Ohfuku Y."/>
            <person name="Funahashi T."/>
            <person name="Tanaka T."/>
            <person name="Kudoh Y."/>
            <person name="Yamazaki J."/>
            <person name="Kushida N."/>
            <person name="Oguchi A."/>
            <person name="Aoki K."/>
            <person name="Yoshizawa T."/>
            <person name="Nakamura Y."/>
            <person name="Robb F.T."/>
            <person name="Horikoshi K."/>
            <person name="Masuchi Y."/>
            <person name="Shizuya H."/>
            <person name="Kikuchi H."/>
        </authorList>
    </citation>
    <scope>NUCLEOTIDE SEQUENCE [LARGE SCALE GENOMIC DNA]</scope>
    <source>
        <strain>ATCC 700860 / DSM 12428 / JCM 9974 / NBRC 100139 / OT-3</strain>
    </source>
</reference>
<accession>O58268</accession>
<keyword id="KW-0002">3D-structure</keyword>
<keyword id="KW-0143">Chaperone</keyword>
<keyword id="KW-0963">Cytoplasm</keyword>
<name>PFDB_PYRHO</name>
<protein>
    <recommendedName>
        <fullName>Prefoldin subunit beta</fullName>
    </recommendedName>
    <alternativeName>
        <fullName>GimC subunit beta</fullName>
    </alternativeName>
</protein>
<comment type="function">
    <text evidence="1">Molecular chaperone capable of stabilizing a range of proteins. Seems to fulfill an ATP-independent, HSP70-like function in archaeal de novo protein folding (By similarity).</text>
</comment>
<comment type="subunit">
    <text evidence="1">Heterohexamer of two alpha and four beta subunits.</text>
</comment>
<comment type="interaction">
    <interactant intactId="EBI-9014082">
        <id>O58268</id>
    </interactant>
    <interactant intactId="EBI-9014072">
        <id>O58263</id>
        <label>pfdA</label>
    </interactant>
    <organismsDiffer>false</organismsDiffer>
    <experiments>2</experiments>
</comment>
<comment type="subcellular location">
    <subcellularLocation>
        <location evidence="1">Cytoplasm</location>
    </subcellularLocation>
</comment>
<comment type="similarity">
    <text evidence="2">Belongs to the prefoldin subunit beta family.</text>
</comment>
<proteinExistence type="evidence at protein level"/>
<evidence type="ECO:0000250" key="1"/>
<evidence type="ECO:0000305" key="2"/>
<evidence type="ECO:0007829" key="3">
    <source>
        <dbReference type="PDB" id="2ZDI"/>
    </source>
</evidence>
<gene>
    <name type="primary">pfdB</name>
    <name type="ordered locus">PH0532</name>
</gene>
<sequence length="117" mass="13316">MQNIPPQVQAMLGQLDTYQQQLQLVIQQKQKVQADLNEAKKALEEIETLPDDAQIYKTVGTLIVKTTKEKAVQELKEKIETLEVRLNALNRQEQKINEKVKELTQKIQAALRPPTAG</sequence>